<dbReference type="EMBL" id="DQ643392">
    <property type="protein sequence ID" value="ABF82079.1"/>
    <property type="molecule type" value="Genomic_DNA"/>
</dbReference>
<dbReference type="RefSeq" id="YP_654621.1">
    <property type="nucleotide sequence ID" value="NC_008187.1"/>
</dbReference>
<dbReference type="SMR" id="Q197B1"/>
<dbReference type="KEGG" id="vg:4156299"/>
<dbReference type="Proteomes" id="UP000001358">
    <property type="component" value="Genome"/>
</dbReference>
<dbReference type="Gene3D" id="1.10.287.1490">
    <property type="match status" value="1"/>
</dbReference>
<dbReference type="Gene3D" id="1.20.5.340">
    <property type="match status" value="1"/>
</dbReference>
<proteinExistence type="predicted"/>
<organism>
    <name type="scientific">Invertebrate iridescent virus 3</name>
    <name type="common">IIV-3</name>
    <name type="synonym">Mosquito iridescent virus</name>
    <dbReference type="NCBI Taxonomy" id="345201"/>
    <lineage>
        <taxon>Viruses</taxon>
        <taxon>Varidnaviria</taxon>
        <taxon>Bamfordvirae</taxon>
        <taxon>Nucleocytoviricota</taxon>
        <taxon>Megaviricetes</taxon>
        <taxon>Pimascovirales</taxon>
        <taxon>Iridoviridae</taxon>
        <taxon>Betairidovirinae</taxon>
        <taxon>Chloriridovirus</taxon>
    </lineage>
</organism>
<feature type="chain" id="PRO_0000387982" description="Uncharacterized protein 049R">
    <location>
        <begin position="1"/>
        <end position="683"/>
    </location>
</feature>
<feature type="region of interest" description="Disordered" evidence="2">
    <location>
        <begin position="213"/>
        <end position="237"/>
    </location>
</feature>
<feature type="coiled-coil region" evidence="1">
    <location>
        <begin position="62"/>
        <end position="124"/>
    </location>
</feature>
<feature type="coiled-coil region" evidence="1">
    <location>
        <begin position="155"/>
        <end position="259"/>
    </location>
</feature>
<feature type="coiled-coil region" evidence="1">
    <location>
        <begin position="346"/>
        <end position="376"/>
    </location>
</feature>
<protein>
    <recommendedName>
        <fullName>Uncharacterized protein 049R</fullName>
    </recommendedName>
</protein>
<sequence>MLRIENTVCKSACRVDSATAQPVYSSFDGENFKAEIHSKLDSFERKLNASPTYRDEEGGGNPEHYETLSQEINDLQSQIENLSLEVENLQGSSSSPSNVAAALAELSQSIRTIKEQLEANRKERYNLTVTVANLTAAVNAAKKTGSESTTATATTTTNYETQLKAFEAQIKALDNQLQTQKNLVQTTSVEAKNDRDSLRKTIEVIRLTVKTLQDQVESQTGPKKRRKSPIENQPTAGSELATLTTNLTFLTQRVEKLSQGVATHTTAMFTLEETMKKVHTTLQEATASNTNNIDAIRTRVQELADKIALFDQVQYSVGYEMAKKNPDSTKLRTDLDSAISTVNEEKKSLLTVKDSVQSLKTQLDELKRTLENDGDVSSLRQTVHDMASSIRDETATIYNKINALEEGLKRGGQTTTTPLTQLQTRVEEIDKTIVKWNNQHGEWTTRLNKLEAGVSNNQTLMNRFIQQVNGDVNPLKELPAELETFKMTITNTWAQLNKKFLDFSAKTDTSVDNFTKKFTEIHPQIASLVDKMDQQIRDNPHTTEKLMDEIRQLKSAMTRLGTQSSGKPIFSINTKSSYNEKSKKTIFGHPGIIFPETVKISSIYITLAAKEADGKEDARLFELTATSTHNNITSTIKQFEKKCTEETILEDYNPPLVIDAQTKLVLSCNQKVFGVAIFTLQYS</sequence>
<keyword id="KW-0175">Coiled coil</keyword>
<keyword id="KW-1185">Reference proteome</keyword>
<evidence type="ECO:0000255" key="1"/>
<evidence type="ECO:0000256" key="2">
    <source>
        <dbReference type="SAM" id="MobiDB-lite"/>
    </source>
</evidence>
<gene>
    <name type="ORF">IIV3-049R</name>
</gene>
<accession>Q197B1</accession>
<reference key="1">
    <citation type="journal article" date="2006" name="J. Virol.">
        <title>Genome of invertebrate iridescent virus type 3 (mosquito iridescent virus).</title>
        <authorList>
            <person name="Delhon G."/>
            <person name="Tulman E.R."/>
            <person name="Afonso C.L."/>
            <person name="Lu Z."/>
            <person name="Becnel J.J."/>
            <person name="Moser B.A."/>
            <person name="Kutish G.F."/>
            <person name="Rock D.L."/>
        </authorList>
    </citation>
    <scope>NUCLEOTIDE SEQUENCE [LARGE SCALE GENOMIC DNA]</scope>
</reference>
<name>049R_IIV3</name>
<organismHost>
    <name type="scientific">Aedes vexans</name>
    <name type="common">Inland floodwater mosquito</name>
    <name type="synonym">Culex vexans</name>
    <dbReference type="NCBI Taxonomy" id="7163"/>
</organismHost>
<organismHost>
    <name type="scientific">Culex territans</name>
    <dbReference type="NCBI Taxonomy" id="42431"/>
</organismHost>
<organismHost>
    <name type="scientific">Culiseta annulata</name>
    <dbReference type="NCBI Taxonomy" id="332058"/>
</organismHost>
<organismHost>
    <name type="scientific">Ochlerotatus sollicitans</name>
    <name type="common">eastern saltmarsh mosquito</name>
    <dbReference type="NCBI Taxonomy" id="310513"/>
</organismHost>
<organismHost>
    <name type="scientific">Ochlerotatus taeniorhynchus</name>
    <name type="common">Black salt marsh mosquito</name>
    <name type="synonym">Aedes taeniorhynchus</name>
    <dbReference type="NCBI Taxonomy" id="329105"/>
</organismHost>
<organismHost>
    <name type="scientific">Psorophora ferox</name>
    <dbReference type="NCBI Taxonomy" id="7183"/>
</organismHost>